<name>MCSB_STAHJ</name>
<protein>
    <recommendedName>
        <fullName evidence="1">Protein-arginine kinase</fullName>
        <ecNumber evidence="1">2.7.14.1</ecNumber>
    </recommendedName>
</protein>
<feature type="chain" id="PRO_0000212036" description="Protein-arginine kinase">
    <location>
        <begin position="1"/>
        <end position="335"/>
    </location>
</feature>
<feature type="domain" description="Phosphagen kinase C-terminal" evidence="1">
    <location>
        <begin position="20"/>
        <end position="243"/>
    </location>
</feature>
<feature type="binding site" evidence="1">
    <location>
        <begin position="23"/>
        <end position="27"/>
    </location>
    <ligand>
        <name>ATP</name>
        <dbReference type="ChEBI" id="CHEBI:30616"/>
    </ligand>
</feature>
<feature type="binding site" evidence="1">
    <location>
        <position position="81"/>
    </location>
    <ligand>
        <name>ATP</name>
        <dbReference type="ChEBI" id="CHEBI:30616"/>
    </ligand>
</feature>
<feature type="binding site" evidence="1">
    <location>
        <position position="114"/>
    </location>
    <ligand>
        <name>ATP</name>
        <dbReference type="ChEBI" id="CHEBI:30616"/>
    </ligand>
</feature>
<feature type="binding site" evidence="1">
    <location>
        <begin position="165"/>
        <end position="169"/>
    </location>
    <ligand>
        <name>ATP</name>
        <dbReference type="ChEBI" id="CHEBI:30616"/>
    </ligand>
</feature>
<feature type="binding site" evidence="1">
    <location>
        <begin position="196"/>
        <end position="201"/>
    </location>
    <ligand>
        <name>ATP</name>
        <dbReference type="ChEBI" id="CHEBI:30616"/>
    </ligand>
</feature>
<comment type="function">
    <text evidence="1">Catalyzes the specific phosphorylation of arginine residues in proteins.</text>
</comment>
<comment type="catalytic activity">
    <reaction evidence="1">
        <text>L-arginyl-[protein] + ATP = N(omega)-phospho-L-arginyl-[protein] + ADP + H(+)</text>
        <dbReference type="Rhea" id="RHEA:43384"/>
        <dbReference type="Rhea" id="RHEA-COMP:10532"/>
        <dbReference type="Rhea" id="RHEA-COMP:10533"/>
        <dbReference type="ChEBI" id="CHEBI:15378"/>
        <dbReference type="ChEBI" id="CHEBI:29965"/>
        <dbReference type="ChEBI" id="CHEBI:30616"/>
        <dbReference type="ChEBI" id="CHEBI:83226"/>
        <dbReference type="ChEBI" id="CHEBI:456216"/>
        <dbReference type="EC" id="2.7.14.1"/>
    </reaction>
</comment>
<comment type="similarity">
    <text evidence="1">Belongs to the ATP:guanido phosphotransferase family.</text>
</comment>
<gene>
    <name evidence="1" type="primary">mcsB</name>
    <name type="ordered locus">SH2485</name>
</gene>
<proteinExistence type="inferred from homology"/>
<accession>Q4L3I3</accession>
<reference key="1">
    <citation type="journal article" date="2005" name="J. Bacteriol.">
        <title>Whole-genome sequencing of Staphylococcus haemolyticus uncovers the extreme plasticity of its genome and the evolution of human-colonizing staphylococcal species.</title>
        <authorList>
            <person name="Takeuchi F."/>
            <person name="Watanabe S."/>
            <person name="Baba T."/>
            <person name="Yuzawa H."/>
            <person name="Ito T."/>
            <person name="Morimoto Y."/>
            <person name="Kuroda M."/>
            <person name="Cui L."/>
            <person name="Takahashi M."/>
            <person name="Ankai A."/>
            <person name="Baba S."/>
            <person name="Fukui S."/>
            <person name="Lee J.C."/>
            <person name="Hiramatsu K."/>
        </authorList>
    </citation>
    <scope>NUCLEOTIDE SEQUENCE [LARGE SCALE GENOMIC DNA]</scope>
    <source>
        <strain>JCSC1435</strain>
    </source>
</reference>
<organism>
    <name type="scientific">Staphylococcus haemolyticus (strain JCSC1435)</name>
    <dbReference type="NCBI Taxonomy" id="279808"/>
    <lineage>
        <taxon>Bacteria</taxon>
        <taxon>Bacillati</taxon>
        <taxon>Bacillota</taxon>
        <taxon>Bacilli</taxon>
        <taxon>Bacillales</taxon>
        <taxon>Staphylococcaceae</taxon>
        <taxon>Staphylococcus</taxon>
    </lineage>
</organism>
<evidence type="ECO:0000255" key="1">
    <source>
        <dbReference type="HAMAP-Rule" id="MF_00602"/>
    </source>
</evidence>
<dbReference type="EC" id="2.7.14.1" evidence="1"/>
<dbReference type="EMBL" id="AP006716">
    <property type="protein sequence ID" value="BAE05794.1"/>
    <property type="molecule type" value="Genomic_DNA"/>
</dbReference>
<dbReference type="RefSeq" id="WP_011276737.1">
    <property type="nucleotide sequence ID" value="NC_007168.1"/>
</dbReference>
<dbReference type="SMR" id="Q4L3I3"/>
<dbReference type="KEGG" id="sha:SH2485"/>
<dbReference type="eggNOG" id="COG3869">
    <property type="taxonomic scope" value="Bacteria"/>
</dbReference>
<dbReference type="HOGENOM" id="CLU_066591_1_0_9"/>
<dbReference type="OrthoDB" id="9791353at2"/>
<dbReference type="Proteomes" id="UP000000543">
    <property type="component" value="Chromosome"/>
</dbReference>
<dbReference type="GO" id="GO:0005615">
    <property type="term" value="C:extracellular space"/>
    <property type="evidence" value="ECO:0007669"/>
    <property type="project" value="TreeGrafter"/>
</dbReference>
<dbReference type="GO" id="GO:0005524">
    <property type="term" value="F:ATP binding"/>
    <property type="evidence" value="ECO:0007669"/>
    <property type="project" value="UniProtKB-KW"/>
</dbReference>
<dbReference type="GO" id="GO:0004111">
    <property type="term" value="F:creatine kinase activity"/>
    <property type="evidence" value="ECO:0007669"/>
    <property type="project" value="InterPro"/>
</dbReference>
<dbReference type="GO" id="GO:0004672">
    <property type="term" value="F:protein kinase activity"/>
    <property type="evidence" value="ECO:0007669"/>
    <property type="project" value="UniProtKB-UniRule"/>
</dbReference>
<dbReference type="GO" id="GO:0046314">
    <property type="term" value="P:phosphocreatine biosynthetic process"/>
    <property type="evidence" value="ECO:0007669"/>
    <property type="project" value="InterPro"/>
</dbReference>
<dbReference type="CDD" id="cd07930">
    <property type="entry name" value="bacterial_phosphagen_kinase"/>
    <property type="match status" value="1"/>
</dbReference>
<dbReference type="FunFam" id="3.30.590.10:FF:000007">
    <property type="entry name" value="Protein-arginine kinase"/>
    <property type="match status" value="1"/>
</dbReference>
<dbReference type="Gene3D" id="3.30.590.10">
    <property type="entry name" value="Glutamine synthetase/guanido kinase, catalytic domain"/>
    <property type="match status" value="1"/>
</dbReference>
<dbReference type="HAMAP" id="MF_00602">
    <property type="entry name" value="Prot_Arg_kinase"/>
    <property type="match status" value="1"/>
</dbReference>
<dbReference type="InterPro" id="IPR023660">
    <property type="entry name" value="Arg_Kinase"/>
</dbReference>
<dbReference type="InterPro" id="IPR000749">
    <property type="entry name" value="ATP-guanido_PTrfase"/>
</dbReference>
<dbReference type="InterPro" id="IPR022415">
    <property type="entry name" value="ATP-guanido_PTrfase_AS"/>
</dbReference>
<dbReference type="InterPro" id="IPR022414">
    <property type="entry name" value="ATP-guanido_PTrfase_cat"/>
</dbReference>
<dbReference type="InterPro" id="IPR014746">
    <property type="entry name" value="Gln_synth/guanido_kin_cat_dom"/>
</dbReference>
<dbReference type="NCBIfam" id="NF002193">
    <property type="entry name" value="PRK01059.1-3"/>
    <property type="match status" value="1"/>
</dbReference>
<dbReference type="PANTHER" id="PTHR11547:SF38">
    <property type="entry name" value="ARGININE KINASE 1-RELATED"/>
    <property type="match status" value="1"/>
</dbReference>
<dbReference type="PANTHER" id="PTHR11547">
    <property type="entry name" value="ARGININE OR CREATINE KINASE"/>
    <property type="match status" value="1"/>
</dbReference>
<dbReference type="Pfam" id="PF00217">
    <property type="entry name" value="ATP-gua_Ptrans"/>
    <property type="match status" value="1"/>
</dbReference>
<dbReference type="SUPFAM" id="SSF55931">
    <property type="entry name" value="Glutamine synthetase/guanido kinase"/>
    <property type="match status" value="1"/>
</dbReference>
<dbReference type="PROSITE" id="PS00112">
    <property type="entry name" value="PHOSPHAGEN_KINASE"/>
    <property type="match status" value="1"/>
</dbReference>
<dbReference type="PROSITE" id="PS51510">
    <property type="entry name" value="PHOSPHAGEN_KINASE_C"/>
    <property type="match status" value="1"/>
</dbReference>
<keyword id="KW-0067">ATP-binding</keyword>
<keyword id="KW-0418">Kinase</keyword>
<keyword id="KW-0547">Nucleotide-binding</keyword>
<keyword id="KW-0808">Transferase</keyword>
<sequence length="335" mass="38543">MSDMNAHISEWMKETEESPIVMSSRIRLARNLENHVHPLMFPSEQDGFRVINEVQDVLPDLDLMRLDTMDQQNKMKLVAKHLISPELIKQPASAVLLNKDESISIMINEEDHIRIQAMGTDLSLQDLYNIASEIDDTLDQSLDISYDEHLGYLTTCPTNIGTGMRASVMLHLPGLSIMKRMNRIAQTINRFGFTIRGIYGEGSQVYGHIYQISNQLTLGKTEDEIIDNLTEVVQQIINEEMQIRERLTQYNELETLDRIYRSLGILQNSRIISMEEASYRLSEVKLGIDLGYLTLSDFKFNELMVSIQSAFIYNDEDETISVNEKRANILREYTQ</sequence>